<feature type="chain" id="PRO_0000148797" description="Aspartyl/glutamyl-tRNA(Asn/Gln) amidotransferase subunit B">
    <location>
        <begin position="1"/>
        <end position="477"/>
    </location>
</feature>
<proteinExistence type="inferred from homology"/>
<gene>
    <name type="primary">gatB</name>
    <name type="ordered locus">LL0165</name>
    <name type="ORF">L0474</name>
</gene>
<dbReference type="EC" id="6.3.5.-"/>
<dbReference type="EMBL" id="AE005176">
    <property type="protein sequence ID" value="AAK04263.1"/>
    <property type="status" value="ALT_INIT"/>
    <property type="molecule type" value="Genomic_DNA"/>
</dbReference>
<dbReference type="PIR" id="E86645">
    <property type="entry name" value="E86645"/>
</dbReference>
<dbReference type="RefSeq" id="NP_266321.2">
    <property type="nucleotide sequence ID" value="NC_002662.1"/>
</dbReference>
<dbReference type="RefSeq" id="WP_010905166.1">
    <property type="nucleotide sequence ID" value="NC_002662.1"/>
</dbReference>
<dbReference type="SMR" id="Q9CJ41"/>
<dbReference type="PaxDb" id="272623-L0474"/>
<dbReference type="EnsemblBacteria" id="AAK04263">
    <property type="protein sequence ID" value="AAK04263"/>
    <property type="gene ID" value="L0474"/>
</dbReference>
<dbReference type="KEGG" id="lla:L0474"/>
<dbReference type="PATRIC" id="fig|272623.7.peg.183"/>
<dbReference type="eggNOG" id="COG0064">
    <property type="taxonomic scope" value="Bacteria"/>
</dbReference>
<dbReference type="HOGENOM" id="CLU_019240_0_0_9"/>
<dbReference type="OrthoDB" id="9804078at2"/>
<dbReference type="Proteomes" id="UP000002196">
    <property type="component" value="Chromosome"/>
</dbReference>
<dbReference type="GO" id="GO:0050566">
    <property type="term" value="F:asparaginyl-tRNA synthase (glutamine-hydrolyzing) activity"/>
    <property type="evidence" value="ECO:0007669"/>
    <property type="project" value="RHEA"/>
</dbReference>
<dbReference type="GO" id="GO:0005524">
    <property type="term" value="F:ATP binding"/>
    <property type="evidence" value="ECO:0007669"/>
    <property type="project" value="UniProtKB-KW"/>
</dbReference>
<dbReference type="GO" id="GO:0050567">
    <property type="term" value="F:glutaminyl-tRNA synthase (glutamine-hydrolyzing) activity"/>
    <property type="evidence" value="ECO:0007669"/>
    <property type="project" value="UniProtKB-UniRule"/>
</dbReference>
<dbReference type="GO" id="GO:0070681">
    <property type="term" value="P:glutaminyl-tRNAGln biosynthesis via transamidation"/>
    <property type="evidence" value="ECO:0007669"/>
    <property type="project" value="TreeGrafter"/>
</dbReference>
<dbReference type="GO" id="GO:0006412">
    <property type="term" value="P:translation"/>
    <property type="evidence" value="ECO:0007669"/>
    <property type="project" value="UniProtKB-UniRule"/>
</dbReference>
<dbReference type="FunFam" id="1.10.10.410:FF:000001">
    <property type="entry name" value="Aspartyl/glutamyl-tRNA(Asn/Gln) amidotransferase subunit B"/>
    <property type="match status" value="1"/>
</dbReference>
<dbReference type="Gene3D" id="1.10.10.410">
    <property type="match status" value="1"/>
</dbReference>
<dbReference type="Gene3D" id="1.10.150.380">
    <property type="entry name" value="GatB domain, N-terminal subdomain"/>
    <property type="match status" value="1"/>
</dbReference>
<dbReference type="HAMAP" id="MF_00121">
    <property type="entry name" value="GatB"/>
    <property type="match status" value="1"/>
</dbReference>
<dbReference type="InterPro" id="IPR017959">
    <property type="entry name" value="Asn/Gln-tRNA_amidoTrfase_suB/E"/>
</dbReference>
<dbReference type="InterPro" id="IPR006075">
    <property type="entry name" value="Asn/Gln-tRNA_Trfase_suB/E_cat"/>
</dbReference>
<dbReference type="InterPro" id="IPR018027">
    <property type="entry name" value="Asn/Gln_amidotransferase"/>
</dbReference>
<dbReference type="InterPro" id="IPR003789">
    <property type="entry name" value="Asn/Gln_tRNA_amidoTrase-B-like"/>
</dbReference>
<dbReference type="InterPro" id="IPR004413">
    <property type="entry name" value="GatB"/>
</dbReference>
<dbReference type="InterPro" id="IPR042114">
    <property type="entry name" value="GatB_C_1"/>
</dbReference>
<dbReference type="InterPro" id="IPR023168">
    <property type="entry name" value="GatB_Yqey_C_2"/>
</dbReference>
<dbReference type="InterPro" id="IPR017958">
    <property type="entry name" value="Gln-tRNA_amidoTrfase_suB_CS"/>
</dbReference>
<dbReference type="InterPro" id="IPR014746">
    <property type="entry name" value="Gln_synth/guanido_kin_cat_dom"/>
</dbReference>
<dbReference type="NCBIfam" id="TIGR00133">
    <property type="entry name" value="gatB"/>
    <property type="match status" value="1"/>
</dbReference>
<dbReference type="NCBIfam" id="NF004011">
    <property type="entry name" value="PRK05477.1-1"/>
    <property type="match status" value="1"/>
</dbReference>
<dbReference type="NCBIfam" id="NF004012">
    <property type="entry name" value="PRK05477.1-2"/>
    <property type="match status" value="1"/>
</dbReference>
<dbReference type="NCBIfam" id="NF004014">
    <property type="entry name" value="PRK05477.1-4"/>
    <property type="match status" value="1"/>
</dbReference>
<dbReference type="PANTHER" id="PTHR11659">
    <property type="entry name" value="GLUTAMYL-TRNA GLN AMIDOTRANSFERASE SUBUNIT B MITOCHONDRIAL AND PROKARYOTIC PET112-RELATED"/>
    <property type="match status" value="1"/>
</dbReference>
<dbReference type="PANTHER" id="PTHR11659:SF0">
    <property type="entry name" value="GLUTAMYL-TRNA(GLN) AMIDOTRANSFERASE SUBUNIT B, MITOCHONDRIAL"/>
    <property type="match status" value="1"/>
</dbReference>
<dbReference type="Pfam" id="PF02934">
    <property type="entry name" value="GatB_N"/>
    <property type="match status" value="1"/>
</dbReference>
<dbReference type="Pfam" id="PF02637">
    <property type="entry name" value="GatB_Yqey"/>
    <property type="match status" value="1"/>
</dbReference>
<dbReference type="SMART" id="SM00845">
    <property type="entry name" value="GatB_Yqey"/>
    <property type="match status" value="1"/>
</dbReference>
<dbReference type="SUPFAM" id="SSF89095">
    <property type="entry name" value="GatB/YqeY motif"/>
    <property type="match status" value="1"/>
</dbReference>
<dbReference type="SUPFAM" id="SSF55931">
    <property type="entry name" value="Glutamine synthetase/guanido kinase"/>
    <property type="match status" value="1"/>
</dbReference>
<dbReference type="PROSITE" id="PS01234">
    <property type="entry name" value="GATB"/>
    <property type="match status" value="1"/>
</dbReference>
<evidence type="ECO:0000250" key="1"/>
<evidence type="ECO:0000305" key="2"/>
<accession>Q9CJ41</accession>
<comment type="function">
    <text evidence="1">Allows the formation of correctly charged Asn-tRNA(Asn) or Gln-tRNA(Gln) through the transamidation of misacylated Asp-tRNA(Asn) or Glu-tRNA(Gln) in organisms which lack either or both of asparaginyl-tRNA or glutaminyl-tRNA synthetases. The reaction takes place in the presence of glutamine and ATP through an activated phospho-Asp-tRNA(Asn) or phospho-Glu-tRNA(Gln) (By similarity).</text>
</comment>
<comment type="catalytic activity">
    <reaction>
        <text>L-glutamyl-tRNA(Gln) + L-glutamine + ATP + H2O = L-glutaminyl-tRNA(Gln) + L-glutamate + ADP + phosphate + H(+)</text>
        <dbReference type="Rhea" id="RHEA:17521"/>
        <dbReference type="Rhea" id="RHEA-COMP:9681"/>
        <dbReference type="Rhea" id="RHEA-COMP:9684"/>
        <dbReference type="ChEBI" id="CHEBI:15377"/>
        <dbReference type="ChEBI" id="CHEBI:15378"/>
        <dbReference type="ChEBI" id="CHEBI:29985"/>
        <dbReference type="ChEBI" id="CHEBI:30616"/>
        <dbReference type="ChEBI" id="CHEBI:43474"/>
        <dbReference type="ChEBI" id="CHEBI:58359"/>
        <dbReference type="ChEBI" id="CHEBI:78520"/>
        <dbReference type="ChEBI" id="CHEBI:78521"/>
        <dbReference type="ChEBI" id="CHEBI:456216"/>
    </reaction>
</comment>
<comment type="catalytic activity">
    <reaction>
        <text>L-aspartyl-tRNA(Asn) + L-glutamine + ATP + H2O = L-asparaginyl-tRNA(Asn) + L-glutamate + ADP + phosphate + 2 H(+)</text>
        <dbReference type="Rhea" id="RHEA:14513"/>
        <dbReference type="Rhea" id="RHEA-COMP:9674"/>
        <dbReference type="Rhea" id="RHEA-COMP:9677"/>
        <dbReference type="ChEBI" id="CHEBI:15377"/>
        <dbReference type="ChEBI" id="CHEBI:15378"/>
        <dbReference type="ChEBI" id="CHEBI:29985"/>
        <dbReference type="ChEBI" id="CHEBI:30616"/>
        <dbReference type="ChEBI" id="CHEBI:43474"/>
        <dbReference type="ChEBI" id="CHEBI:58359"/>
        <dbReference type="ChEBI" id="CHEBI:78515"/>
        <dbReference type="ChEBI" id="CHEBI:78516"/>
        <dbReference type="ChEBI" id="CHEBI:456216"/>
    </reaction>
</comment>
<comment type="subunit">
    <text evidence="1">Heterotrimer of A, B and C subunits.</text>
</comment>
<comment type="similarity">
    <text evidence="2">Belongs to the GatB/GatE family. GatB subfamily.</text>
</comment>
<comment type="sequence caution" evidence="2">
    <conflict type="erroneous initiation">
        <sequence resource="EMBL-CDS" id="AAK04263"/>
    </conflict>
</comment>
<keyword id="KW-0067">ATP-binding</keyword>
<keyword id="KW-0436">Ligase</keyword>
<keyword id="KW-0547">Nucleotide-binding</keyword>
<keyword id="KW-0648">Protein biosynthesis</keyword>
<keyword id="KW-1185">Reference proteome</keyword>
<name>GATB_LACLA</name>
<organism>
    <name type="scientific">Lactococcus lactis subsp. lactis (strain IL1403)</name>
    <name type="common">Streptococcus lactis</name>
    <dbReference type="NCBI Taxonomy" id="272623"/>
    <lineage>
        <taxon>Bacteria</taxon>
        <taxon>Bacillati</taxon>
        <taxon>Bacillota</taxon>
        <taxon>Bacilli</taxon>
        <taxon>Lactobacillales</taxon>
        <taxon>Streptococcaceae</taxon>
        <taxon>Lactococcus</taxon>
    </lineage>
</organism>
<protein>
    <recommendedName>
        <fullName>Aspartyl/glutamyl-tRNA(Asn/Gln) amidotransferase subunit B</fullName>
        <shortName>Asp/Glu-ADT subunit B</shortName>
        <ecNumber>6.3.5.-</ecNumber>
    </recommendedName>
</protein>
<reference key="1">
    <citation type="journal article" date="2001" name="Genome Res.">
        <title>The complete genome sequence of the lactic acid bacterium Lactococcus lactis ssp. lactis IL1403.</title>
        <authorList>
            <person name="Bolotin A."/>
            <person name="Wincker P."/>
            <person name="Mauger S."/>
            <person name="Jaillon O."/>
            <person name="Malarme K."/>
            <person name="Weissenbach J."/>
            <person name="Ehrlich S.D."/>
            <person name="Sorokin A."/>
        </authorList>
    </citation>
    <scope>NUCLEOTIDE SEQUENCE [LARGE SCALE GENOMIC DNA]</scope>
    <source>
        <strain>IL1403</strain>
    </source>
</reference>
<sequence>MNFETVIGLEVHVELSTNSKIFSPASTKFGGDPNTNTNVIDWSLPGVLPVMNKGVIDSGIKAALALNMDIHKSMHFDRKNYFYPDNPKAYQISQFDEPIGYNGSIEIELEDGHKATIRIERAHLEEDAGKNTHGTDGYSYVDLNRQGVPLIEIVSEADMRTPEEAYAYLTALKEAILYTGISDVKMEEGSMRCDANVSLRPYGQEAFGVKTEVKNMNSFSNVKKALDFEVDRQAKILRAGGEIRQETRRFNDKTGETILMRVKEGASDYRYFPEPDVPRFEISEEWVEQMRESLPMTAKARRAHYINDLALSDYDARQLTATKEVSDFFDQAIKFDTDPKLVSNWLQGEVAQYLNSEKKELHEIGLTPENLTEMIRLISDGTISSKIAKKVFIELAKNGGSAEEFVKKAGLVQISDPAVLLPIIHDVFAKNEQSVADYRGGKQNAAKALVGQLMKATKGQANPTVAQKLLYQELDNF</sequence>